<feature type="signal peptide" evidence="2">
    <location>
        <begin position="1"/>
        <end position="20"/>
    </location>
</feature>
<feature type="chain" id="PRO_0000333265" description="Peroxidase">
    <location>
        <begin position="21"/>
        <end position="363"/>
    </location>
</feature>
<feature type="active site" description="Proton acceptor" evidence="3 4">
    <location>
        <position position="75"/>
    </location>
</feature>
<feature type="binding site" evidence="3">
    <location>
        <position position="76"/>
    </location>
    <ligand>
        <name>Ca(2+)</name>
        <dbReference type="ChEBI" id="CHEBI:29108"/>
        <label>1</label>
    </ligand>
</feature>
<feature type="binding site" evidence="3">
    <location>
        <position position="94"/>
    </location>
    <ligand>
        <name>Ca(2+)</name>
        <dbReference type="ChEBI" id="CHEBI:29108"/>
        <label>1</label>
    </ligand>
</feature>
<feature type="binding site" evidence="3">
    <location>
        <position position="96"/>
    </location>
    <ligand>
        <name>Ca(2+)</name>
        <dbReference type="ChEBI" id="CHEBI:29108"/>
        <label>1</label>
    </ligand>
</feature>
<feature type="binding site" evidence="3">
    <location>
        <position position="98"/>
    </location>
    <ligand>
        <name>Ca(2+)</name>
        <dbReference type="ChEBI" id="CHEBI:29108"/>
        <label>1</label>
    </ligand>
</feature>
<feature type="binding site" description="axial binding residue" evidence="3">
    <location>
        <position position="203"/>
    </location>
    <ligand>
        <name>heme b</name>
        <dbReference type="ChEBI" id="CHEBI:60344"/>
    </ligand>
    <ligandPart>
        <name>Fe</name>
        <dbReference type="ChEBI" id="CHEBI:18248"/>
    </ligandPart>
</feature>
<feature type="binding site" evidence="3">
    <location>
        <position position="204"/>
    </location>
    <ligand>
        <name>Ca(2+)</name>
        <dbReference type="ChEBI" id="CHEBI:29108"/>
        <label>2</label>
    </ligand>
</feature>
<feature type="binding site" evidence="3">
    <location>
        <position position="221"/>
    </location>
    <ligand>
        <name>Ca(2+)</name>
        <dbReference type="ChEBI" id="CHEBI:29108"/>
        <label>2</label>
    </ligand>
</feature>
<feature type="binding site" evidence="3">
    <location>
        <position position="223"/>
    </location>
    <ligand>
        <name>Ca(2+)</name>
        <dbReference type="ChEBI" id="CHEBI:29108"/>
        <label>2</label>
    </ligand>
</feature>
<feature type="binding site" evidence="3">
    <location>
        <position position="226"/>
    </location>
    <ligand>
        <name>Ca(2+)</name>
        <dbReference type="ChEBI" id="CHEBI:29108"/>
        <label>2</label>
    </ligand>
</feature>
<feature type="binding site" evidence="3">
    <location>
        <position position="228"/>
    </location>
    <ligand>
        <name>Ca(2+)</name>
        <dbReference type="ChEBI" id="CHEBI:29108"/>
        <label>2</label>
    </ligand>
</feature>
<feature type="site" description="Transition state stabilizer" evidence="3">
    <location>
        <position position="71"/>
    </location>
</feature>
<feature type="modified residue" description="Pyrrolidone carboxylic acid" evidence="3">
    <location>
        <position position="21"/>
    </location>
</feature>
<feature type="glycosylation site" description="N-linked (GlcNAc...) (high mannose) asparagine" evidence="1">
    <location>
        <position position="162"/>
    </location>
</feature>
<feature type="glycosylation site" description="O-linked (Man...) serine" evidence="1">
    <location>
        <position position="358"/>
    </location>
</feature>
<feature type="disulfide bond" evidence="3">
    <location>
        <begin position="31"/>
        <end position="43"/>
    </location>
</feature>
<feature type="disulfide bond" evidence="3">
    <location>
        <begin position="42"/>
        <end position="312"/>
    </location>
</feature>
<feature type="disulfide bond" evidence="3">
    <location>
        <begin position="62"/>
        <end position="148"/>
    </location>
</feature>
<feature type="disulfide bond" evidence="3">
    <location>
        <begin position="276"/>
        <end position="341"/>
    </location>
</feature>
<proteinExistence type="inferred from homology"/>
<name>PER_COPC7</name>
<evidence type="ECO:0000250" key="1"/>
<evidence type="ECO:0000255" key="2"/>
<evidence type="ECO:0000255" key="3">
    <source>
        <dbReference type="PROSITE-ProRule" id="PRU00297"/>
    </source>
</evidence>
<evidence type="ECO:0000255" key="4">
    <source>
        <dbReference type="PROSITE-ProRule" id="PRU10012"/>
    </source>
</evidence>
<evidence type="ECO:0000305" key="5"/>
<protein>
    <recommendedName>
        <fullName>Peroxidase</fullName>
        <ecNumber>1.11.1.7</ecNumber>
    </recommendedName>
</protein>
<accession>A8NK72</accession>
<keyword id="KW-0106">Calcium</keyword>
<keyword id="KW-1015">Disulfide bond</keyword>
<keyword id="KW-0325">Glycoprotein</keyword>
<keyword id="KW-0349">Heme</keyword>
<keyword id="KW-0376">Hydrogen peroxide</keyword>
<keyword id="KW-0408">Iron</keyword>
<keyword id="KW-0479">Metal-binding</keyword>
<keyword id="KW-0560">Oxidoreductase</keyword>
<keyword id="KW-0575">Peroxidase</keyword>
<keyword id="KW-0873">Pyrrolidone carboxylic acid</keyword>
<keyword id="KW-1185">Reference proteome</keyword>
<keyword id="KW-0964">Secreted</keyword>
<keyword id="KW-0732">Signal</keyword>
<comment type="catalytic activity">
    <reaction>
        <text>2 a phenolic donor + H2O2 = 2 a phenolic radical donor + 2 H2O</text>
        <dbReference type="Rhea" id="RHEA:56136"/>
        <dbReference type="ChEBI" id="CHEBI:15377"/>
        <dbReference type="ChEBI" id="CHEBI:16240"/>
        <dbReference type="ChEBI" id="CHEBI:139520"/>
        <dbReference type="ChEBI" id="CHEBI:139521"/>
        <dbReference type="EC" id="1.11.1.7"/>
    </reaction>
</comment>
<comment type="cofactor">
    <cofactor>
        <name>Ca(2+)</name>
        <dbReference type="ChEBI" id="CHEBI:29108"/>
    </cofactor>
    <text>Binds 2 calcium ions per subunit.</text>
</comment>
<comment type="cofactor">
    <cofactor>
        <name>heme b</name>
        <dbReference type="ChEBI" id="CHEBI:60344"/>
    </cofactor>
    <text>Binds 1 heme b (iron(II)-protoporphyrin IX) group per subunit.</text>
</comment>
<comment type="subcellular location">
    <subcellularLocation>
        <location>Secreted</location>
    </subcellularLocation>
</comment>
<comment type="similarity">
    <text evidence="5">Belongs to the peroxidase family. Ligninase subfamily.</text>
</comment>
<sequence>MKLSLLSTFAAVIIGALALPQGPGGGGSVTCPGGQSTSNSQCCVWFDVLDDLQTNFYQGSKCESPVRKILRIVFHDAIGFSPALTAAGQFGGGGADGSIIAHSNIELAFPANGGLTDTIEALRAVGINHGVSFGDLIQFATAVGMSNCPGSPRLEFLTGRSNSSQPSPPSLIPGPGNIVTAILDRMGDAGFSPDEVVDLLAAHSLASQEGLNSAIFRSPLDSTPQVFDTQFYIETLLKGTTQPGPSLGFAEELSPFPGEFRMRSDALLARDSRTACRWQSMTSSNEVMGQRYRAAMAKMSVLGFDRNALTDCSDVIPSAVSNNAAPVIPGGLTVDDIEVSCPSEPFPEIATASGPLPSLAPAP</sequence>
<gene>
    <name type="primary">CIP1</name>
    <name type="ORF">CC1G_02104</name>
</gene>
<dbReference type="EC" id="1.11.1.7"/>
<dbReference type="EMBL" id="AACS02000010">
    <property type="protein sequence ID" value="EAU87345.1"/>
    <property type="molecule type" value="Genomic_DNA"/>
</dbReference>
<dbReference type="RefSeq" id="XP_001834368.1">
    <property type="nucleotide sequence ID" value="XM_001834316.1"/>
</dbReference>
<dbReference type="SMR" id="A8NK72"/>
<dbReference type="STRING" id="240176.A8NK72"/>
<dbReference type="PeroxiBase" id="2403">
    <property type="entry name" value="CcinCIIBA"/>
</dbReference>
<dbReference type="GlyCosmos" id="A8NK72">
    <property type="glycosylation" value="2 sites, No reported glycans"/>
</dbReference>
<dbReference type="GeneID" id="6010882"/>
<dbReference type="KEGG" id="cci:CC1G_02104"/>
<dbReference type="VEuPathDB" id="FungiDB:CC1G_02104"/>
<dbReference type="eggNOG" id="ENOG502QT8W">
    <property type="taxonomic scope" value="Eukaryota"/>
</dbReference>
<dbReference type="HOGENOM" id="CLU_041038_0_1_1"/>
<dbReference type="InParanoid" id="A8NK72"/>
<dbReference type="OMA" id="RTACHWQ"/>
<dbReference type="OrthoDB" id="2113341at2759"/>
<dbReference type="Proteomes" id="UP000001861">
    <property type="component" value="Unassembled WGS sequence"/>
</dbReference>
<dbReference type="GO" id="GO:0005576">
    <property type="term" value="C:extracellular region"/>
    <property type="evidence" value="ECO:0007669"/>
    <property type="project" value="UniProtKB-SubCell"/>
</dbReference>
<dbReference type="GO" id="GO:0020037">
    <property type="term" value="F:heme binding"/>
    <property type="evidence" value="ECO:0007669"/>
    <property type="project" value="InterPro"/>
</dbReference>
<dbReference type="GO" id="GO:0140825">
    <property type="term" value="F:lactoperoxidase activity"/>
    <property type="evidence" value="ECO:0007669"/>
    <property type="project" value="UniProtKB-EC"/>
</dbReference>
<dbReference type="GO" id="GO:0046872">
    <property type="term" value="F:metal ion binding"/>
    <property type="evidence" value="ECO:0007669"/>
    <property type="project" value="UniProtKB-KW"/>
</dbReference>
<dbReference type="GO" id="GO:0034599">
    <property type="term" value="P:cellular response to oxidative stress"/>
    <property type="evidence" value="ECO:0007669"/>
    <property type="project" value="InterPro"/>
</dbReference>
<dbReference type="GO" id="GO:0042744">
    <property type="term" value="P:hydrogen peroxide catabolic process"/>
    <property type="evidence" value="ECO:0007669"/>
    <property type="project" value="UniProtKB-KW"/>
</dbReference>
<dbReference type="GO" id="GO:0000302">
    <property type="term" value="P:response to reactive oxygen species"/>
    <property type="evidence" value="ECO:0007669"/>
    <property type="project" value="TreeGrafter"/>
</dbReference>
<dbReference type="CDD" id="cd00692">
    <property type="entry name" value="ligninase"/>
    <property type="match status" value="1"/>
</dbReference>
<dbReference type="Gene3D" id="1.10.520.10">
    <property type="match status" value="1"/>
</dbReference>
<dbReference type="Gene3D" id="1.10.420.10">
    <property type="entry name" value="Peroxidase, domain 2"/>
    <property type="match status" value="1"/>
</dbReference>
<dbReference type="InterPro" id="IPR044831">
    <property type="entry name" value="Ccp1-like"/>
</dbReference>
<dbReference type="InterPro" id="IPR002016">
    <property type="entry name" value="Haem_peroxidase"/>
</dbReference>
<dbReference type="InterPro" id="IPR010255">
    <property type="entry name" value="Haem_peroxidase_sf"/>
</dbReference>
<dbReference type="InterPro" id="IPR001621">
    <property type="entry name" value="Ligninase"/>
</dbReference>
<dbReference type="InterPro" id="IPR024589">
    <property type="entry name" value="Ligninase_C"/>
</dbReference>
<dbReference type="InterPro" id="IPR019794">
    <property type="entry name" value="Peroxidases_AS"/>
</dbReference>
<dbReference type="InterPro" id="IPR019793">
    <property type="entry name" value="Peroxidases_heam-ligand_BS"/>
</dbReference>
<dbReference type="PANTHER" id="PTHR31356:SF66">
    <property type="entry name" value="CATALASE-PEROXIDASE"/>
    <property type="match status" value="1"/>
</dbReference>
<dbReference type="PANTHER" id="PTHR31356">
    <property type="entry name" value="THYLAKOID LUMENAL 29 KDA PROTEIN, CHLOROPLASTIC-RELATED"/>
    <property type="match status" value="1"/>
</dbReference>
<dbReference type="Pfam" id="PF00141">
    <property type="entry name" value="peroxidase"/>
    <property type="match status" value="1"/>
</dbReference>
<dbReference type="Pfam" id="PF11895">
    <property type="entry name" value="Peroxidase_ext"/>
    <property type="match status" value="1"/>
</dbReference>
<dbReference type="PRINTS" id="PR00462">
    <property type="entry name" value="LIGNINASE"/>
</dbReference>
<dbReference type="PRINTS" id="PR00458">
    <property type="entry name" value="PEROXIDASE"/>
</dbReference>
<dbReference type="SUPFAM" id="SSF48113">
    <property type="entry name" value="Heme-dependent peroxidases"/>
    <property type="match status" value="1"/>
</dbReference>
<dbReference type="PROSITE" id="PS00435">
    <property type="entry name" value="PEROXIDASE_1"/>
    <property type="match status" value="1"/>
</dbReference>
<dbReference type="PROSITE" id="PS00436">
    <property type="entry name" value="PEROXIDASE_2"/>
    <property type="match status" value="1"/>
</dbReference>
<dbReference type="PROSITE" id="PS50873">
    <property type="entry name" value="PEROXIDASE_4"/>
    <property type="match status" value="1"/>
</dbReference>
<organism>
    <name type="scientific">Coprinopsis cinerea (strain Okayama-7 / 130 / ATCC MYA-4618 / FGSC 9003)</name>
    <name type="common">Inky cap fungus</name>
    <name type="synonym">Hormographiella aspergillata</name>
    <dbReference type="NCBI Taxonomy" id="240176"/>
    <lineage>
        <taxon>Eukaryota</taxon>
        <taxon>Fungi</taxon>
        <taxon>Dikarya</taxon>
        <taxon>Basidiomycota</taxon>
        <taxon>Agaricomycotina</taxon>
        <taxon>Agaricomycetes</taxon>
        <taxon>Agaricomycetidae</taxon>
        <taxon>Agaricales</taxon>
        <taxon>Agaricineae</taxon>
        <taxon>Psathyrellaceae</taxon>
        <taxon>Coprinopsis</taxon>
    </lineage>
</organism>
<reference key="1">
    <citation type="journal article" date="2010" name="Proc. Natl. Acad. Sci. U.S.A.">
        <title>Insights into evolution of multicellular fungi from the assembled chromosomes of the mushroom Coprinopsis cinerea (Coprinus cinereus).</title>
        <authorList>
            <person name="Stajich J.E."/>
            <person name="Wilke S.K."/>
            <person name="Ahren D."/>
            <person name="Au C.H."/>
            <person name="Birren B.W."/>
            <person name="Borodovsky M."/>
            <person name="Burns C."/>
            <person name="Canbaeck B."/>
            <person name="Casselton L.A."/>
            <person name="Cheng C.K."/>
            <person name="Deng J."/>
            <person name="Dietrich F.S."/>
            <person name="Fargo D.C."/>
            <person name="Farman M.L."/>
            <person name="Gathman A.C."/>
            <person name="Goldberg J."/>
            <person name="Guigo R."/>
            <person name="Hoegger P.J."/>
            <person name="Hooker J.B."/>
            <person name="Huggins A."/>
            <person name="James T.Y."/>
            <person name="Kamada T."/>
            <person name="Kilaru S."/>
            <person name="Kodira C."/>
            <person name="Kuees U."/>
            <person name="Kupfer D."/>
            <person name="Kwan H.S."/>
            <person name="Lomsadze A."/>
            <person name="Li W."/>
            <person name="Lilly W.W."/>
            <person name="Ma L.-J."/>
            <person name="Mackey A.J."/>
            <person name="Manning G."/>
            <person name="Martin F."/>
            <person name="Muraguchi H."/>
            <person name="Natvig D.O."/>
            <person name="Palmerini H."/>
            <person name="Ramesh M.A."/>
            <person name="Rehmeyer C.J."/>
            <person name="Roe B.A."/>
            <person name="Shenoy N."/>
            <person name="Stanke M."/>
            <person name="Ter-Hovhannisyan V."/>
            <person name="Tunlid A."/>
            <person name="Velagapudi R."/>
            <person name="Vision T.J."/>
            <person name="Zeng Q."/>
            <person name="Zolan M.E."/>
            <person name="Pukkila P.J."/>
        </authorList>
    </citation>
    <scope>NUCLEOTIDE SEQUENCE [LARGE SCALE GENOMIC DNA]</scope>
    <source>
        <strain>Okayama-7 / 130 / ATCC MYA-4618 / FGSC 9003</strain>
    </source>
</reference>